<organism>
    <name type="scientific">Prochlorococcus marinus (strain MIT 9301)</name>
    <dbReference type="NCBI Taxonomy" id="167546"/>
    <lineage>
        <taxon>Bacteria</taxon>
        <taxon>Bacillati</taxon>
        <taxon>Cyanobacteriota</taxon>
        <taxon>Cyanophyceae</taxon>
        <taxon>Synechococcales</taxon>
        <taxon>Prochlorococcaceae</taxon>
        <taxon>Prochlorococcus</taxon>
    </lineage>
</organism>
<name>PSAA_PROM0</name>
<dbReference type="EC" id="1.97.1.12" evidence="1"/>
<dbReference type="EMBL" id="CP000576">
    <property type="protein sequence ID" value="ABO18339.1"/>
    <property type="molecule type" value="Genomic_DNA"/>
</dbReference>
<dbReference type="RefSeq" id="WP_011863632.1">
    <property type="nucleotide sequence ID" value="NC_009091.1"/>
</dbReference>
<dbReference type="SMR" id="A3PF14"/>
<dbReference type="STRING" id="167546.P9301_17161"/>
<dbReference type="KEGG" id="pmg:P9301_17161"/>
<dbReference type="eggNOG" id="COG2885">
    <property type="taxonomic scope" value="Bacteria"/>
</dbReference>
<dbReference type="HOGENOM" id="CLU_016126_1_0_3"/>
<dbReference type="OrthoDB" id="499313at2"/>
<dbReference type="Proteomes" id="UP000001430">
    <property type="component" value="Chromosome"/>
</dbReference>
<dbReference type="GO" id="GO:0009522">
    <property type="term" value="C:photosystem I"/>
    <property type="evidence" value="ECO:0007669"/>
    <property type="project" value="UniProtKB-KW"/>
</dbReference>
<dbReference type="GO" id="GO:0031676">
    <property type="term" value="C:plasma membrane-derived thylakoid membrane"/>
    <property type="evidence" value="ECO:0007669"/>
    <property type="project" value="UniProtKB-SubCell"/>
</dbReference>
<dbReference type="GO" id="GO:0051539">
    <property type="term" value="F:4 iron, 4 sulfur cluster binding"/>
    <property type="evidence" value="ECO:0007669"/>
    <property type="project" value="UniProtKB-KW"/>
</dbReference>
<dbReference type="GO" id="GO:0016168">
    <property type="term" value="F:chlorophyll binding"/>
    <property type="evidence" value="ECO:0007669"/>
    <property type="project" value="UniProtKB-KW"/>
</dbReference>
<dbReference type="GO" id="GO:0009055">
    <property type="term" value="F:electron transfer activity"/>
    <property type="evidence" value="ECO:0007669"/>
    <property type="project" value="UniProtKB-UniRule"/>
</dbReference>
<dbReference type="GO" id="GO:0000287">
    <property type="term" value="F:magnesium ion binding"/>
    <property type="evidence" value="ECO:0007669"/>
    <property type="project" value="UniProtKB-UniRule"/>
</dbReference>
<dbReference type="GO" id="GO:0016491">
    <property type="term" value="F:oxidoreductase activity"/>
    <property type="evidence" value="ECO:0007669"/>
    <property type="project" value="UniProtKB-KW"/>
</dbReference>
<dbReference type="GO" id="GO:0015979">
    <property type="term" value="P:photosynthesis"/>
    <property type="evidence" value="ECO:0007669"/>
    <property type="project" value="UniProtKB-UniRule"/>
</dbReference>
<dbReference type="Gene3D" id="1.20.1130.10">
    <property type="entry name" value="Photosystem I PsaA/PsaB"/>
    <property type="match status" value="1"/>
</dbReference>
<dbReference type="HAMAP" id="MF_00458">
    <property type="entry name" value="PSI_PsaA"/>
    <property type="match status" value="1"/>
</dbReference>
<dbReference type="InterPro" id="IPR006243">
    <property type="entry name" value="PSI_PsaA"/>
</dbReference>
<dbReference type="InterPro" id="IPR001280">
    <property type="entry name" value="PSI_PsaA/B"/>
</dbReference>
<dbReference type="InterPro" id="IPR020586">
    <property type="entry name" value="PSI_PsaA/B_CS"/>
</dbReference>
<dbReference type="InterPro" id="IPR036408">
    <property type="entry name" value="PSI_PsaA/B_sf"/>
</dbReference>
<dbReference type="NCBIfam" id="TIGR01335">
    <property type="entry name" value="psaA"/>
    <property type="match status" value="1"/>
</dbReference>
<dbReference type="PANTHER" id="PTHR30128">
    <property type="entry name" value="OUTER MEMBRANE PROTEIN, OMPA-RELATED"/>
    <property type="match status" value="1"/>
</dbReference>
<dbReference type="PANTHER" id="PTHR30128:SF19">
    <property type="entry name" value="PHOTOSYSTEM I P700 CHLOROPHYLL A APOPROTEIN A1-RELATED"/>
    <property type="match status" value="1"/>
</dbReference>
<dbReference type="Pfam" id="PF00223">
    <property type="entry name" value="PsaA_PsaB"/>
    <property type="match status" value="1"/>
</dbReference>
<dbReference type="PIRSF" id="PIRSF002905">
    <property type="entry name" value="PSI_A"/>
    <property type="match status" value="1"/>
</dbReference>
<dbReference type="PRINTS" id="PR00257">
    <property type="entry name" value="PHOTSYSPSAAB"/>
</dbReference>
<dbReference type="SUPFAM" id="SSF81558">
    <property type="entry name" value="Photosystem I subunits PsaA/PsaB"/>
    <property type="match status" value="1"/>
</dbReference>
<dbReference type="PROSITE" id="PS00419">
    <property type="entry name" value="PHOTOSYSTEM_I_PSAAB"/>
    <property type="match status" value="1"/>
</dbReference>
<protein>
    <recommendedName>
        <fullName evidence="1">Photosystem I P700 chlorophyll a apoprotein A1</fullName>
        <ecNumber evidence="1">1.97.1.12</ecNumber>
    </recommendedName>
    <alternativeName>
        <fullName evidence="1">PsaA</fullName>
    </alternativeName>
</protein>
<feature type="chain" id="PRO_0000294200" description="Photosystem I P700 chlorophyll a apoprotein A1">
    <location>
        <begin position="1"/>
        <end position="767"/>
    </location>
</feature>
<feature type="transmembrane region" description="Helical; Name=I" evidence="1">
    <location>
        <begin position="76"/>
        <end position="99"/>
    </location>
</feature>
<feature type="transmembrane region" description="Helical; Name=II" evidence="1">
    <location>
        <begin position="162"/>
        <end position="185"/>
    </location>
</feature>
<feature type="transmembrane region" description="Helical; Name=III" evidence="1">
    <location>
        <begin position="201"/>
        <end position="225"/>
    </location>
</feature>
<feature type="transmembrane region" description="Helical; Name=IV" evidence="1">
    <location>
        <begin position="309"/>
        <end position="327"/>
    </location>
</feature>
<feature type="transmembrane region" description="Helical; Name=V" evidence="1">
    <location>
        <begin position="368"/>
        <end position="391"/>
    </location>
</feature>
<feature type="transmembrane region" description="Helical; Name=VI" evidence="1">
    <location>
        <begin position="407"/>
        <end position="433"/>
    </location>
</feature>
<feature type="transmembrane region" description="Helical; Name=VII" evidence="1">
    <location>
        <begin position="455"/>
        <end position="477"/>
    </location>
</feature>
<feature type="transmembrane region" description="Helical; Name=VIII" evidence="1">
    <location>
        <begin position="558"/>
        <end position="576"/>
    </location>
</feature>
<feature type="transmembrane region" description="Helical; Name=IX" evidence="1">
    <location>
        <begin position="616"/>
        <end position="637"/>
    </location>
</feature>
<feature type="transmembrane region" description="Helical; Name=X" evidence="1">
    <location>
        <begin position="681"/>
        <end position="703"/>
    </location>
</feature>
<feature type="transmembrane region" description="Helical; Name=XI" evidence="1">
    <location>
        <begin position="741"/>
        <end position="761"/>
    </location>
</feature>
<feature type="region of interest" description="Disordered" evidence="2">
    <location>
        <begin position="1"/>
        <end position="22"/>
    </location>
</feature>
<feature type="compositionally biased region" description="Basic and acidic residues" evidence="2">
    <location>
        <begin position="8"/>
        <end position="22"/>
    </location>
</feature>
<feature type="binding site" evidence="1">
    <location>
        <position position="600"/>
    </location>
    <ligand>
        <name>[4Fe-4S] cluster</name>
        <dbReference type="ChEBI" id="CHEBI:49883"/>
        <note>ligand shared between dimeric partners</note>
    </ligand>
</feature>
<feature type="binding site" evidence="1">
    <location>
        <position position="609"/>
    </location>
    <ligand>
        <name>[4Fe-4S] cluster</name>
        <dbReference type="ChEBI" id="CHEBI:49883"/>
        <note>ligand shared between dimeric partners</note>
    </ligand>
</feature>
<feature type="binding site" description="axial binding residue" evidence="1">
    <location>
        <position position="692"/>
    </location>
    <ligand>
        <name>divinylchlorophyll a'</name>
        <dbReference type="ChEBI" id="CHEBI:189420"/>
        <label>A1</label>
    </ligand>
    <ligandPart>
        <name>Mg</name>
        <dbReference type="ChEBI" id="CHEBI:25107"/>
    </ligandPart>
</feature>
<feature type="binding site" description="axial binding residue" evidence="1">
    <location>
        <position position="700"/>
    </location>
    <ligand>
        <name>divinyl chlorophyll a</name>
        <dbReference type="ChEBI" id="CHEBI:73095"/>
        <label>A3</label>
    </ligand>
    <ligandPart>
        <name>Mg</name>
        <dbReference type="ChEBI" id="CHEBI:25107"/>
    </ligandPart>
</feature>
<feature type="binding site" evidence="1">
    <location>
        <position position="708"/>
    </location>
    <ligand>
        <name>divinyl chlorophyll a</name>
        <dbReference type="ChEBI" id="CHEBI:73095"/>
        <label>A3</label>
    </ligand>
</feature>
<feature type="binding site" evidence="1">
    <location>
        <position position="709"/>
    </location>
    <ligand>
        <name>phylloquinone</name>
        <dbReference type="ChEBI" id="CHEBI:18067"/>
        <label>A</label>
    </ligand>
</feature>
<reference key="1">
    <citation type="journal article" date="2007" name="PLoS Genet.">
        <title>Patterns and implications of gene gain and loss in the evolution of Prochlorococcus.</title>
        <authorList>
            <person name="Kettler G.C."/>
            <person name="Martiny A.C."/>
            <person name="Huang K."/>
            <person name="Zucker J."/>
            <person name="Coleman M.L."/>
            <person name="Rodrigue S."/>
            <person name="Chen F."/>
            <person name="Lapidus A."/>
            <person name="Ferriera S."/>
            <person name="Johnson J."/>
            <person name="Steglich C."/>
            <person name="Church G.M."/>
            <person name="Richardson P."/>
            <person name="Chisholm S.W."/>
        </authorList>
    </citation>
    <scope>NUCLEOTIDE SEQUENCE [LARGE SCALE GENOMIC DNA]</scope>
    <source>
        <strain>MIT 9301</strain>
    </source>
</reference>
<comment type="function">
    <text evidence="1">PsaA and PsaB bind P700, the primary electron donor of photosystem I (PSI), as well as the electron acceptors A0, A1 and FX. PSI is a plastocyanin/cytochrome c6-ferredoxin oxidoreductase, converting photonic excitation into a charge separation, which transfers an electron from the donor P700 chlorophyll pair to the spectroscopically characterized acceptors A0, A1, FX, FA and FB in turn. Oxidized P700 is reduced on the lumenal side of the thylakoid membrane by plastocyanin or cytochrome c6.</text>
</comment>
<comment type="catalytic activity">
    <reaction evidence="1">
        <text>reduced [plastocyanin] + hnu + oxidized [2Fe-2S]-[ferredoxin] = oxidized [plastocyanin] + reduced [2Fe-2S]-[ferredoxin]</text>
        <dbReference type="Rhea" id="RHEA:30407"/>
        <dbReference type="Rhea" id="RHEA-COMP:10000"/>
        <dbReference type="Rhea" id="RHEA-COMP:10001"/>
        <dbReference type="Rhea" id="RHEA-COMP:10039"/>
        <dbReference type="Rhea" id="RHEA-COMP:10040"/>
        <dbReference type="ChEBI" id="CHEBI:29036"/>
        <dbReference type="ChEBI" id="CHEBI:30212"/>
        <dbReference type="ChEBI" id="CHEBI:33737"/>
        <dbReference type="ChEBI" id="CHEBI:33738"/>
        <dbReference type="ChEBI" id="CHEBI:49552"/>
        <dbReference type="EC" id="1.97.1.12"/>
    </reaction>
</comment>
<comment type="cofactor">
    <text evidence="1">PSI electron transfer chain: 5 divinyl chlorophyll a, 1 divinyl chlorophyll a', 2 phylloquinones and 3 4Fe-4S clusters. PSI core antenna: 90 divinyl chlorophyll a, 22 carotenoids, 3 phospholipids and 1 galactolipid. P700 is a divinyl chlorophyll a/divinyl chlorophyll a' dimer, A0 is one or more divinyl chlorophyll a, A1 is one or both phylloquinones and FX is a shared 4Fe-4S iron-sulfur center.</text>
</comment>
<comment type="subunit">
    <text evidence="1">The PsaA/B heterodimer binds the P700 divinyl chlorophyll special pair and subsequent electron acceptors. PSI consists of a core antenna complex that captures photons, and an electron transfer chain that converts photonic excitation into a charge separation. The cyanobacterial PSI reaction center is composed of one copy each of PsaA,B,C,D,E,F,I,J,K,L,M and X, and forms trimeric complexes.</text>
</comment>
<comment type="subcellular location">
    <subcellularLocation>
        <location evidence="1">Cellular thylakoid membrane</location>
        <topology evidence="1">Multi-pass membrane protein</topology>
    </subcellularLocation>
</comment>
<comment type="similarity">
    <text evidence="1">Belongs to the PsaA/PsaB family.</text>
</comment>
<keyword id="KW-0004">4Fe-4S</keyword>
<keyword id="KW-0148">Chlorophyll</keyword>
<keyword id="KW-0157">Chromophore</keyword>
<keyword id="KW-0249">Electron transport</keyword>
<keyword id="KW-0408">Iron</keyword>
<keyword id="KW-0411">Iron-sulfur</keyword>
<keyword id="KW-0460">Magnesium</keyword>
<keyword id="KW-0472">Membrane</keyword>
<keyword id="KW-0479">Metal-binding</keyword>
<keyword id="KW-0560">Oxidoreductase</keyword>
<keyword id="KW-0602">Photosynthesis</keyword>
<keyword id="KW-0603">Photosystem I</keyword>
<keyword id="KW-1185">Reference proteome</keyword>
<keyword id="KW-0793">Thylakoid</keyword>
<keyword id="KW-0812">Transmembrane</keyword>
<keyword id="KW-1133">Transmembrane helix</keyword>
<keyword id="KW-0813">Transport</keyword>
<proteinExistence type="inferred from homology"/>
<accession>A3PF14</accession>
<evidence type="ECO:0000255" key="1">
    <source>
        <dbReference type="HAMAP-Rule" id="MF_00458"/>
    </source>
</evidence>
<evidence type="ECO:0000256" key="2">
    <source>
        <dbReference type="SAM" id="MobiDB-lite"/>
    </source>
</evidence>
<sequence>MTISPPESGEKNKKVLEDPVKADPRPIDFAKLDKPGFWSTKLSKGPKTTTWIWNLHADAHDFDVHTGDAEEATRKIFSAHFGHLAVIFIWMSAAFFHGARFSNYSGWLADPTHVKPGAQQVWAIVGQEMLNADLGANYNGIQISSGIFHMWRAWGITNESELMALAIGAVVMAALMLHAGIFHYHKAAPKMEWFQDIESMLNHHIAGLVGLGSLAWAGHCIHIGAPTAALLDAIDAGSPLVINGKEIATIADMPMPHQLCDPQIIGQIFPGLASGTGNFFSLNWLAFSDFLTFKGGLNPVTGSLWMTDVSHHHLAFGVIAIIGGHMYRTNYGIGHSMKEILDSQQGDPILFPAPKGHQGLFEFMAESRHAQLAVNLAMLGSISILVSHHMYAMPPYPYIATDYMTVLGLFTHHMWIGGLFIVGAGAHAGIAMVRDYDPAKHIDNVLDRILKARDALISHLNWVCMWLGFHSFGLYIHNDTMRALGRPQDMFSDSAIQLQPIFAQWVQSIQASAVGTSLLAGTAEALPHKALSEVFNGSLVEVGGKVAIAPIPLGTADLMIHHIHAFQIHVTVLILLKGVLYARSSRLIPDKASLGFRFPCDGPGRGGTCQVSSWDHVFLALFWMYNCLSIVIFHFSWKMQSDVWGLTGGNFAQSSITINGWLRDFLWAQASQVLTSYGQSISMYGLMFLGAHFIWAFSLMFLFSGRGYWQELFESIVWAHNKLKVAPTIQPRALSITQGRAVGVTHFLVGGIATTWAFFHARLFGLG</sequence>
<gene>
    <name evidence="1" type="primary">psaA</name>
    <name type="ordered locus">P9301_17161</name>
</gene>